<evidence type="ECO:0000250" key="1"/>
<evidence type="ECO:0000255" key="2">
    <source>
        <dbReference type="PROSITE-ProRule" id="PRU00042"/>
    </source>
</evidence>
<evidence type="ECO:0000256" key="3">
    <source>
        <dbReference type="SAM" id="MobiDB-lite"/>
    </source>
</evidence>
<evidence type="ECO:0000305" key="4"/>
<sequence>MSRRKQAKPRSLKDPNCKLEDTSEDGESPDCKKRQEEGDELEEEEAVHSCDSCLQVFESLSDITEHKISQCQLTDGADIEDDPTCSWPASSPSSKDQASPIHGEGFDFGEEEGIPGLPYPCQFCDKSFSRLSYLKHHEQSHSDKLPFKCTYCSRLFKHKRSRDRHIKLHTGDKKYHCSECDASFSRSDHLKIHLKTHTSNKPYKCAICRRGFLSSSSLHGHMQVHERNKDCSQSGSRMEEWKMKDTQKCSQCEEGFDFPEDLQKHIAECHPECSPNDDRGALQCMYCHELFMEETSLLNHMEQIHNSEKKNSCNICSENFHSVEELYSHMDSHQHPESCNPSNSPSLVTVGYTSVSSTTPDSNLSVDSSTMVEVAPPLAKGRGRKRAVQQTGDAPTSKQARVSYSCIYCSKQLFSSLAVLQIHLKTMHLDKPEQAHICQYCLEVLPSLFNLNEHLKQVHETQDPALIVSTMSAMVYQCNFCSEIFNDLNMLQDHIRSSHGFPNPVTKDSNAFFCPHCYMGFLTDTSLEEHIRQVHCELGNSRFGSPVLGTPKEPVVEVYSCSYCTNSPIFNSVLKLNKHIKENHKNIPLALNYIHNGKKSRALSPLSPITLEQSSLKMMQSLGGTPSRLAGEYICNQCGAKYTSLDGFQTHLKTHLDTVLPKLTCPQCNKEFPNQESLLKHVTIHFMITSTYYICESCDKQFTSVDDLQKHLLDMHTFGFFRCTLCQEVFDSKVSIQLHLAVKHSNEKKVYRCTSCNWDFRTETDLQLHVKHNHLENQGKMHKCIFCGESFGTEVELQCHITTHSKKYNCKFCSKAFHAIILLEKHLREKHCVFEDKTQNCGTNGASEQIQKEEVELQTLLTNNQESHNSHDGSEEDIDTSEPMYGCDICGAAYTMESLLQNHQLRDHNIRPGESAIVKKKAELIKGNYKCNVCSRTFFSEGGLREHMQTHLGPVKHYMCPICGERFPSLLTLTEHKVTHSKSLDTGNCRICKLPLQCEEDFLEHCQMHPDLRNSLTGFRCVVCMQTVTSTLELKIHGTFHMQKTGTASVVQSAGRVQNLQKLYKCASCLKEFRSKQDLVKLDINGLPYGLCASCVNLSKSASPNANVTLSTNRQVISQTDSLTCVEAKNYKTSVLKTRCSSCNVKFESETELQNHIQTIHRELTSENSATQLKTPQVSPMARISPQSDEKKTYQCIKCQMVFYNEWDIQVHVANHMIDEGLNHECKLCSQTFDSPAKLQCHLIEHSFEGMGGTFKCPVCFTVFVQANKLQQHIFSAHGQEDKIYDCAQCPQKFFFQTELQNHTMSQHSS</sequence>
<feature type="chain" id="PRO_0000306873" description="Zinc finger protein 521">
    <location>
        <begin position="1"/>
        <end position="1310"/>
    </location>
</feature>
<feature type="zinc finger region" description="C2H2-type 1; degenerate" evidence="2">
    <location>
        <begin position="48"/>
        <end position="68"/>
    </location>
</feature>
<feature type="zinc finger region" description="C2H2-type 2" evidence="2">
    <location>
        <begin position="119"/>
        <end position="141"/>
    </location>
</feature>
<feature type="zinc finger region" description="C2H2-type 3" evidence="2">
    <location>
        <begin position="147"/>
        <end position="169"/>
    </location>
</feature>
<feature type="zinc finger region" description="C2H2-type 4" evidence="2">
    <location>
        <begin position="175"/>
        <end position="197"/>
    </location>
</feature>
<feature type="zinc finger region" description="C2H2-type 5" evidence="2">
    <location>
        <begin position="203"/>
        <end position="225"/>
    </location>
</feature>
<feature type="zinc finger region" description="C2H2-type 6" evidence="2">
    <location>
        <begin position="247"/>
        <end position="270"/>
    </location>
</feature>
<feature type="zinc finger region" description="C2H2-type 7" evidence="2">
    <location>
        <begin position="282"/>
        <end position="305"/>
    </location>
</feature>
<feature type="zinc finger region" description="C2H2-type 8" evidence="2">
    <location>
        <begin position="311"/>
        <end position="333"/>
    </location>
</feature>
<feature type="zinc finger region" description="C2H2-type 9; degenerate" evidence="2">
    <location>
        <begin position="404"/>
        <end position="428"/>
    </location>
</feature>
<feature type="zinc finger region" description="C2H2-type 10" evidence="2">
    <location>
        <begin position="436"/>
        <end position="459"/>
    </location>
</feature>
<feature type="zinc finger region" description="C2H2-type 11" evidence="2">
    <location>
        <begin position="476"/>
        <end position="499"/>
    </location>
</feature>
<feature type="zinc finger region" description="C2H2-type 12" evidence="2">
    <location>
        <begin position="512"/>
        <end position="535"/>
    </location>
</feature>
<feature type="zinc finger region" description="C2H2-type 13; atypical" evidence="2">
    <location>
        <begin position="559"/>
        <end position="584"/>
    </location>
</feature>
<feature type="zinc finger region" description="C2H2-type 14" evidence="2">
    <location>
        <begin position="633"/>
        <end position="655"/>
    </location>
</feature>
<feature type="zinc finger region" description="C2H2-type 15" evidence="2">
    <location>
        <begin position="663"/>
        <end position="685"/>
    </location>
</feature>
<feature type="zinc finger region" description="C2H2-type 16" evidence="2">
    <location>
        <begin position="693"/>
        <end position="716"/>
    </location>
</feature>
<feature type="zinc finger region" description="C2H2-type 17" evidence="2">
    <location>
        <begin position="721"/>
        <end position="744"/>
    </location>
</feature>
<feature type="zinc finger region" description="C2H2-type 18" evidence="2">
    <location>
        <begin position="751"/>
        <end position="774"/>
    </location>
</feature>
<feature type="zinc finger region" description="C2H2-type 19" evidence="2">
    <location>
        <begin position="782"/>
        <end position="804"/>
    </location>
</feature>
<feature type="zinc finger region" description="C2H2-type 20" evidence="2">
    <location>
        <begin position="808"/>
        <end position="831"/>
    </location>
</feature>
<feature type="zinc finger region" description="C2H2-type 21; degenerate" evidence="2">
    <location>
        <begin position="885"/>
        <end position="907"/>
    </location>
</feature>
<feature type="zinc finger region" description="C2H2-type 22" evidence="2">
    <location>
        <begin position="929"/>
        <end position="951"/>
    </location>
</feature>
<feature type="zinc finger region" description="C2H2-type 23" evidence="2">
    <location>
        <begin position="958"/>
        <end position="980"/>
    </location>
</feature>
<feature type="zinc finger region" description="C2H2-type 24" evidence="2">
    <location>
        <begin position="1019"/>
        <end position="1041"/>
    </location>
</feature>
<feature type="zinc finger region" description="C2H2-type 25; degenerate" evidence="2">
    <location>
        <begin position="1064"/>
        <end position="1082"/>
    </location>
</feature>
<feature type="zinc finger region" description="C2H2-type 26" evidence="2">
    <location>
        <begin position="1138"/>
        <end position="1161"/>
    </location>
</feature>
<feature type="zinc finger region" description="C2H2-type 27" evidence="2">
    <location>
        <begin position="1194"/>
        <end position="1216"/>
    </location>
</feature>
<feature type="zinc finger region" description="C2H2-type 28" evidence="2">
    <location>
        <begin position="1224"/>
        <end position="1246"/>
    </location>
</feature>
<feature type="zinc finger region" description="C2H2-type 29" evidence="2">
    <location>
        <begin position="1255"/>
        <end position="1278"/>
    </location>
</feature>
<feature type="zinc finger region" description="C2H2-type 30" evidence="2">
    <location>
        <begin position="1285"/>
        <end position="1308"/>
    </location>
</feature>
<feature type="region of interest" description="Disordered" evidence="3">
    <location>
        <begin position="1"/>
        <end position="46"/>
    </location>
</feature>
<feature type="region of interest" description="Disordered" evidence="3">
    <location>
        <begin position="82"/>
        <end position="106"/>
    </location>
</feature>
<feature type="compositionally biased region" description="Basic residues" evidence="3">
    <location>
        <begin position="1"/>
        <end position="10"/>
    </location>
</feature>
<feature type="compositionally biased region" description="Basic and acidic residues" evidence="3">
    <location>
        <begin position="11"/>
        <end position="21"/>
    </location>
</feature>
<feature type="compositionally biased region" description="Polar residues" evidence="3">
    <location>
        <begin position="87"/>
        <end position="97"/>
    </location>
</feature>
<gene>
    <name type="primary">znf521</name>
</gene>
<keyword id="KW-0010">Activator</keyword>
<keyword id="KW-0217">Developmental protein</keyword>
<keyword id="KW-0221">Differentiation</keyword>
<keyword id="KW-0238">DNA-binding</keyword>
<keyword id="KW-0479">Metal-binding</keyword>
<keyword id="KW-0539">Nucleus</keyword>
<keyword id="KW-1185">Reference proteome</keyword>
<keyword id="KW-0677">Repeat</keyword>
<keyword id="KW-0678">Repressor</keyword>
<keyword id="KW-0804">Transcription</keyword>
<keyword id="KW-0805">Transcription regulation</keyword>
<keyword id="KW-0862">Zinc</keyword>
<keyword id="KW-0863">Zinc-finger</keyword>
<protein>
    <recommendedName>
        <fullName>Zinc finger protein 521</fullName>
    </recommendedName>
</protein>
<proteinExistence type="evidence at transcript level"/>
<accession>Q6NUD7</accession>
<reference key="1">
    <citation type="submission" date="2004-04" db="EMBL/GenBank/DDBJ databases">
        <authorList>
            <consortium name="NIH - Xenopus Gene Collection (XGC) project"/>
        </authorList>
    </citation>
    <scope>NUCLEOTIDE SEQUENCE [LARGE SCALE MRNA]</scope>
    <source>
        <tissue>Ovary</tissue>
    </source>
</reference>
<organism>
    <name type="scientific">Xenopus laevis</name>
    <name type="common">African clawed frog</name>
    <dbReference type="NCBI Taxonomy" id="8355"/>
    <lineage>
        <taxon>Eukaryota</taxon>
        <taxon>Metazoa</taxon>
        <taxon>Chordata</taxon>
        <taxon>Craniata</taxon>
        <taxon>Vertebrata</taxon>
        <taxon>Euteleostomi</taxon>
        <taxon>Amphibia</taxon>
        <taxon>Batrachia</taxon>
        <taxon>Anura</taxon>
        <taxon>Pipoidea</taxon>
        <taxon>Pipidae</taxon>
        <taxon>Xenopodinae</taxon>
        <taxon>Xenopus</taxon>
        <taxon>Xenopus</taxon>
    </lineage>
</organism>
<dbReference type="EMBL" id="BC068658">
    <property type="protein sequence ID" value="AAH68658.1"/>
    <property type="molecule type" value="mRNA"/>
</dbReference>
<dbReference type="RefSeq" id="NP_001084597.1">
    <property type="nucleotide sequence ID" value="NM_001091128.1"/>
</dbReference>
<dbReference type="GeneID" id="414550"/>
<dbReference type="KEGG" id="xla:414550"/>
<dbReference type="AGR" id="Xenbase:XB-GENE-6252560"/>
<dbReference type="CTD" id="414550"/>
<dbReference type="Xenbase" id="XB-GENE-6252560">
    <property type="gene designation" value="znf521.S"/>
</dbReference>
<dbReference type="OrthoDB" id="10014897at2759"/>
<dbReference type="Proteomes" id="UP000186698">
    <property type="component" value="Chromosome 6S"/>
</dbReference>
<dbReference type="Bgee" id="414550">
    <property type="expression patterns" value="Expressed in brain and 19 other cell types or tissues"/>
</dbReference>
<dbReference type="GO" id="GO:0005634">
    <property type="term" value="C:nucleus"/>
    <property type="evidence" value="ECO:0000318"/>
    <property type="project" value="GO_Central"/>
</dbReference>
<dbReference type="GO" id="GO:0001228">
    <property type="term" value="F:DNA-binding transcription activator activity, RNA polymerase II-specific"/>
    <property type="evidence" value="ECO:0007669"/>
    <property type="project" value="TreeGrafter"/>
</dbReference>
<dbReference type="GO" id="GO:0000978">
    <property type="term" value="F:RNA polymerase II cis-regulatory region sequence-specific DNA binding"/>
    <property type="evidence" value="ECO:0007669"/>
    <property type="project" value="TreeGrafter"/>
</dbReference>
<dbReference type="GO" id="GO:0008270">
    <property type="term" value="F:zinc ion binding"/>
    <property type="evidence" value="ECO:0007669"/>
    <property type="project" value="UniProtKB-KW"/>
</dbReference>
<dbReference type="GO" id="GO:0030154">
    <property type="term" value="P:cell differentiation"/>
    <property type="evidence" value="ECO:0007669"/>
    <property type="project" value="UniProtKB-KW"/>
</dbReference>
<dbReference type="GO" id="GO:0006357">
    <property type="term" value="P:regulation of transcription by RNA polymerase II"/>
    <property type="evidence" value="ECO:0000318"/>
    <property type="project" value="GO_Central"/>
</dbReference>
<dbReference type="FunFam" id="3.30.160.60:FF:000483">
    <property type="entry name" value="Zinc finger protein 423"/>
    <property type="match status" value="1"/>
</dbReference>
<dbReference type="FunFam" id="3.30.160.60:FF:000548">
    <property type="entry name" value="Zinc finger protein 423"/>
    <property type="match status" value="1"/>
</dbReference>
<dbReference type="FunFam" id="3.30.160.60:FF:000244">
    <property type="entry name" value="zinc finger protein 423"/>
    <property type="match status" value="1"/>
</dbReference>
<dbReference type="FunFam" id="3.30.160.60:FF:000107">
    <property type="entry name" value="Zinc finger protein 521"/>
    <property type="match status" value="1"/>
</dbReference>
<dbReference type="FunFam" id="3.30.160.60:FF:000143">
    <property type="entry name" value="Zinc finger protein 521"/>
    <property type="match status" value="1"/>
</dbReference>
<dbReference type="FunFam" id="3.30.160.60:FF:000167">
    <property type="entry name" value="Zinc finger protein 521"/>
    <property type="match status" value="1"/>
</dbReference>
<dbReference type="FunFam" id="3.30.160.60:FF:000261">
    <property type="entry name" value="Zinc finger protein 521"/>
    <property type="match status" value="1"/>
</dbReference>
<dbReference type="FunFam" id="3.30.160.60:FF:000906">
    <property type="entry name" value="Zinc finger protein 521"/>
    <property type="match status" value="1"/>
</dbReference>
<dbReference type="FunFam" id="3.30.160.60:FF:000998">
    <property type="entry name" value="Zinc finger protein 521"/>
    <property type="match status" value="1"/>
</dbReference>
<dbReference type="FunFam" id="3.30.160.60:FF:002441">
    <property type="entry name" value="Zinc finger protein 521"/>
    <property type="match status" value="1"/>
</dbReference>
<dbReference type="FunFam" id="3.30.160.60:FF:000624">
    <property type="entry name" value="zinc finger protein 697"/>
    <property type="match status" value="1"/>
</dbReference>
<dbReference type="Gene3D" id="3.30.160.60">
    <property type="entry name" value="Classic Zinc Finger"/>
    <property type="match status" value="13"/>
</dbReference>
<dbReference type="InterPro" id="IPR036236">
    <property type="entry name" value="Znf_C2H2_sf"/>
</dbReference>
<dbReference type="InterPro" id="IPR013087">
    <property type="entry name" value="Znf_C2H2_type"/>
</dbReference>
<dbReference type="PANTHER" id="PTHR24376:SF235">
    <property type="entry name" value="C2H2-TYPE DOMAIN-CONTAINING PROTEIN"/>
    <property type="match status" value="1"/>
</dbReference>
<dbReference type="PANTHER" id="PTHR24376">
    <property type="entry name" value="ZINC FINGER PROTEIN"/>
    <property type="match status" value="1"/>
</dbReference>
<dbReference type="Pfam" id="PF00096">
    <property type="entry name" value="zf-C2H2"/>
    <property type="match status" value="7"/>
</dbReference>
<dbReference type="Pfam" id="PF13912">
    <property type="entry name" value="zf-C2H2_6"/>
    <property type="match status" value="4"/>
</dbReference>
<dbReference type="SMART" id="SM00355">
    <property type="entry name" value="ZnF_C2H2"/>
    <property type="match status" value="30"/>
</dbReference>
<dbReference type="SUPFAM" id="SSF57667">
    <property type="entry name" value="beta-beta-alpha zinc fingers"/>
    <property type="match status" value="11"/>
</dbReference>
<dbReference type="PROSITE" id="PS00028">
    <property type="entry name" value="ZINC_FINGER_C2H2_1"/>
    <property type="match status" value="27"/>
</dbReference>
<dbReference type="PROSITE" id="PS50157">
    <property type="entry name" value="ZINC_FINGER_C2H2_2"/>
    <property type="match status" value="24"/>
</dbReference>
<name>ZN521_XENLA</name>
<comment type="function">
    <text evidence="1">Transcription factor that can both act as an activator or a repressor depending on the context. Involved in BMP signaling and in the regulation of the immature compartment of the hematopoietic system (By similarity).</text>
</comment>
<comment type="subcellular location">
    <subcellularLocation>
        <location evidence="1">Nucleus</location>
    </subcellularLocation>
</comment>
<comment type="similarity">
    <text evidence="4">Belongs to the krueppel C2H2-type zinc-finger protein family.</text>
</comment>